<gene>
    <name evidence="1" type="primary">hemL</name>
    <name type="ordered locus">Csac_1654</name>
</gene>
<keyword id="KW-0963">Cytoplasm</keyword>
<keyword id="KW-0413">Isomerase</keyword>
<keyword id="KW-0627">Porphyrin biosynthesis</keyword>
<keyword id="KW-0663">Pyridoxal phosphate</keyword>
<sequence>MRFDKSKEIFDNTKRYIPGGVNSPVRAFKNLSITPPVISKGKGCRIFDIDGNEYIDFVLSWGAMILGHCDPDVVNSIKEVVEDQIAFGAPTEIEYKMAKLVCETAQVDMVRFVNSGTEATMTAIRLAKGYTGKKKIVKFAGCYHGHHDIFLKEAGSAVAELRLKGIDEDIVQNTIVVEYNNLDSIEKAFKENKDEISAVIIEPVAGNMGVVPAKKEFLQALREICDLHGSLLIFDEVITGFRLSLKGARALYNVEPDLVTFGKIIGGGLPCGAVGGKKEIMQCLAPQGNVFQAGTMSGNPIVMSAGYATIKKLKENPDIYTYLELLAQKLEGNLAKVFSSSNLTFCINRVGSMLTVFFGVEKVENFEMAKKSNLSMFKKFAEYMITNGIYIPSSQFEAMFLSSAHTESDIERFAEVAEGFAKFVKKP</sequence>
<accession>A4XK09</accession>
<comment type="catalytic activity">
    <reaction evidence="1">
        <text>(S)-4-amino-5-oxopentanoate = 5-aminolevulinate</text>
        <dbReference type="Rhea" id="RHEA:14265"/>
        <dbReference type="ChEBI" id="CHEBI:57501"/>
        <dbReference type="ChEBI" id="CHEBI:356416"/>
        <dbReference type="EC" id="5.4.3.8"/>
    </reaction>
</comment>
<comment type="cofactor">
    <cofactor evidence="1">
        <name>pyridoxal 5'-phosphate</name>
        <dbReference type="ChEBI" id="CHEBI:597326"/>
    </cofactor>
</comment>
<comment type="pathway">
    <text evidence="1">Porphyrin-containing compound metabolism; protoporphyrin-IX biosynthesis; 5-aminolevulinate from L-glutamyl-tRNA(Glu): step 2/2.</text>
</comment>
<comment type="subunit">
    <text evidence="1">Homodimer.</text>
</comment>
<comment type="subcellular location">
    <subcellularLocation>
        <location evidence="1">Cytoplasm</location>
    </subcellularLocation>
</comment>
<comment type="similarity">
    <text evidence="1">Belongs to the class-III pyridoxal-phosphate-dependent aminotransferase family. HemL subfamily.</text>
</comment>
<reference key="1">
    <citation type="submission" date="2007-04" db="EMBL/GenBank/DDBJ databases">
        <title>Genome sequence of the thermophilic hydrogen-producing bacterium Caldicellulosiruptor saccharolyticus DSM 8903.</title>
        <authorList>
            <person name="Copeland A."/>
            <person name="Lucas S."/>
            <person name="Lapidus A."/>
            <person name="Barry K."/>
            <person name="Detter J.C."/>
            <person name="Glavina del Rio T."/>
            <person name="Hammon N."/>
            <person name="Israni S."/>
            <person name="Dalin E."/>
            <person name="Tice H."/>
            <person name="Pitluck S."/>
            <person name="Kiss H."/>
            <person name="Brettin T."/>
            <person name="Bruce D."/>
            <person name="Han C."/>
            <person name="Schmutz J."/>
            <person name="Larimer F."/>
            <person name="Land M."/>
            <person name="Hauser L."/>
            <person name="Kyrpides N."/>
            <person name="Lykidis A."/>
            <person name="van de Werken H.J.G."/>
            <person name="Verhaart M.R.A."/>
            <person name="VanFossen A.L."/>
            <person name="Lewis D.L."/>
            <person name="Nichols J.D."/>
            <person name="Goorissen H.P."/>
            <person name="van Niel E.W.J."/>
            <person name="Stams F.J.M."/>
            <person name="Willquist K.U."/>
            <person name="Ward D.E."/>
            <person name="van der Oost J."/>
            <person name="Kelly R.M."/>
            <person name="Kengen S.M.W."/>
            <person name="Richardson P."/>
        </authorList>
    </citation>
    <scope>NUCLEOTIDE SEQUENCE [LARGE SCALE GENOMIC DNA]</scope>
    <source>
        <strain>ATCC 43494 / DSM 8903 / Tp8T 6331</strain>
    </source>
</reference>
<protein>
    <recommendedName>
        <fullName evidence="1">Glutamate-1-semialdehyde 2,1-aminomutase</fullName>
        <shortName evidence="1">GSA</shortName>
        <ecNumber evidence="1">5.4.3.8</ecNumber>
    </recommendedName>
    <alternativeName>
        <fullName evidence="1">Glutamate-1-semialdehyde aminotransferase</fullName>
        <shortName evidence="1">GSA-AT</shortName>
    </alternativeName>
</protein>
<organism>
    <name type="scientific">Caldicellulosiruptor saccharolyticus (strain ATCC 43494 / DSM 8903 / Tp8T 6331)</name>
    <dbReference type="NCBI Taxonomy" id="351627"/>
    <lineage>
        <taxon>Bacteria</taxon>
        <taxon>Bacillati</taxon>
        <taxon>Bacillota</taxon>
        <taxon>Bacillota incertae sedis</taxon>
        <taxon>Caldicellulosiruptorales</taxon>
        <taxon>Caldicellulosiruptoraceae</taxon>
        <taxon>Caldicellulosiruptor</taxon>
    </lineage>
</organism>
<name>GSA_CALS8</name>
<dbReference type="EC" id="5.4.3.8" evidence="1"/>
<dbReference type="EMBL" id="CP000679">
    <property type="protein sequence ID" value="ABP67244.1"/>
    <property type="molecule type" value="Genomic_DNA"/>
</dbReference>
<dbReference type="RefSeq" id="WP_011917179.1">
    <property type="nucleotide sequence ID" value="NC_009437.1"/>
</dbReference>
<dbReference type="SMR" id="A4XK09"/>
<dbReference type="STRING" id="351627.Csac_1654"/>
<dbReference type="KEGG" id="csc:Csac_1654"/>
<dbReference type="eggNOG" id="COG0001">
    <property type="taxonomic scope" value="Bacteria"/>
</dbReference>
<dbReference type="HOGENOM" id="CLU_016922_1_5_9"/>
<dbReference type="OrthoDB" id="9801052at2"/>
<dbReference type="UniPathway" id="UPA00251">
    <property type="reaction ID" value="UER00317"/>
</dbReference>
<dbReference type="Proteomes" id="UP000000256">
    <property type="component" value="Chromosome"/>
</dbReference>
<dbReference type="GO" id="GO:0005737">
    <property type="term" value="C:cytoplasm"/>
    <property type="evidence" value="ECO:0007669"/>
    <property type="project" value="UniProtKB-SubCell"/>
</dbReference>
<dbReference type="GO" id="GO:0042286">
    <property type="term" value="F:glutamate-1-semialdehyde 2,1-aminomutase activity"/>
    <property type="evidence" value="ECO:0007669"/>
    <property type="project" value="UniProtKB-UniRule"/>
</dbReference>
<dbReference type="GO" id="GO:0030170">
    <property type="term" value="F:pyridoxal phosphate binding"/>
    <property type="evidence" value="ECO:0007669"/>
    <property type="project" value="InterPro"/>
</dbReference>
<dbReference type="GO" id="GO:0008483">
    <property type="term" value="F:transaminase activity"/>
    <property type="evidence" value="ECO:0007669"/>
    <property type="project" value="InterPro"/>
</dbReference>
<dbReference type="GO" id="GO:0006782">
    <property type="term" value="P:protoporphyrinogen IX biosynthetic process"/>
    <property type="evidence" value="ECO:0007669"/>
    <property type="project" value="UniProtKB-UniRule"/>
</dbReference>
<dbReference type="CDD" id="cd00610">
    <property type="entry name" value="OAT_like"/>
    <property type="match status" value="1"/>
</dbReference>
<dbReference type="FunFam" id="3.40.640.10:FF:000021">
    <property type="entry name" value="Glutamate-1-semialdehyde 2,1-aminomutase"/>
    <property type="match status" value="1"/>
</dbReference>
<dbReference type="Gene3D" id="3.90.1150.10">
    <property type="entry name" value="Aspartate Aminotransferase, domain 1"/>
    <property type="match status" value="1"/>
</dbReference>
<dbReference type="Gene3D" id="3.40.640.10">
    <property type="entry name" value="Type I PLP-dependent aspartate aminotransferase-like (Major domain)"/>
    <property type="match status" value="1"/>
</dbReference>
<dbReference type="HAMAP" id="MF_00375">
    <property type="entry name" value="HemL_aminotrans_3"/>
    <property type="match status" value="1"/>
</dbReference>
<dbReference type="InterPro" id="IPR004639">
    <property type="entry name" value="4pyrrol_synth_GluAld_NH2Trfase"/>
</dbReference>
<dbReference type="InterPro" id="IPR005814">
    <property type="entry name" value="Aminotrans_3"/>
</dbReference>
<dbReference type="InterPro" id="IPR049704">
    <property type="entry name" value="Aminotrans_3_PPA_site"/>
</dbReference>
<dbReference type="InterPro" id="IPR015424">
    <property type="entry name" value="PyrdxlP-dep_Trfase"/>
</dbReference>
<dbReference type="InterPro" id="IPR015421">
    <property type="entry name" value="PyrdxlP-dep_Trfase_major"/>
</dbReference>
<dbReference type="InterPro" id="IPR015422">
    <property type="entry name" value="PyrdxlP-dep_Trfase_small"/>
</dbReference>
<dbReference type="NCBIfam" id="TIGR00713">
    <property type="entry name" value="hemL"/>
    <property type="match status" value="1"/>
</dbReference>
<dbReference type="NCBIfam" id="NF000818">
    <property type="entry name" value="PRK00062.1"/>
    <property type="match status" value="1"/>
</dbReference>
<dbReference type="PANTHER" id="PTHR43713">
    <property type="entry name" value="GLUTAMATE-1-SEMIALDEHYDE 2,1-AMINOMUTASE"/>
    <property type="match status" value="1"/>
</dbReference>
<dbReference type="PANTHER" id="PTHR43713:SF3">
    <property type="entry name" value="GLUTAMATE-1-SEMIALDEHYDE 2,1-AMINOMUTASE 1, CHLOROPLASTIC-RELATED"/>
    <property type="match status" value="1"/>
</dbReference>
<dbReference type="Pfam" id="PF00202">
    <property type="entry name" value="Aminotran_3"/>
    <property type="match status" value="1"/>
</dbReference>
<dbReference type="SUPFAM" id="SSF53383">
    <property type="entry name" value="PLP-dependent transferases"/>
    <property type="match status" value="1"/>
</dbReference>
<dbReference type="PROSITE" id="PS00600">
    <property type="entry name" value="AA_TRANSFER_CLASS_3"/>
    <property type="match status" value="1"/>
</dbReference>
<feature type="chain" id="PRO_1000059979" description="Glutamate-1-semialdehyde 2,1-aminomutase">
    <location>
        <begin position="1"/>
        <end position="427"/>
    </location>
</feature>
<feature type="modified residue" description="N6-(pyridoxal phosphate)lysine" evidence="1">
    <location>
        <position position="263"/>
    </location>
</feature>
<proteinExistence type="inferred from homology"/>
<evidence type="ECO:0000255" key="1">
    <source>
        <dbReference type="HAMAP-Rule" id="MF_00375"/>
    </source>
</evidence>